<organism>
    <name type="scientific">Rattus norvegicus</name>
    <name type="common">Rat</name>
    <dbReference type="NCBI Taxonomy" id="10116"/>
    <lineage>
        <taxon>Eukaryota</taxon>
        <taxon>Metazoa</taxon>
        <taxon>Chordata</taxon>
        <taxon>Craniata</taxon>
        <taxon>Vertebrata</taxon>
        <taxon>Euteleostomi</taxon>
        <taxon>Mammalia</taxon>
        <taxon>Eutheria</taxon>
        <taxon>Euarchontoglires</taxon>
        <taxon>Glires</taxon>
        <taxon>Rodentia</taxon>
        <taxon>Myomorpha</taxon>
        <taxon>Muroidea</taxon>
        <taxon>Muridae</taxon>
        <taxon>Murinae</taxon>
        <taxon>Rattus</taxon>
    </lineage>
</organism>
<proteinExistence type="evidence at protein level"/>
<protein>
    <recommendedName>
        <fullName>Kit ligand</fullName>
    </recommendedName>
    <alternativeName>
        <fullName>Hematopoietic growth factor KL</fullName>
    </alternativeName>
    <alternativeName>
        <fullName>Mast cell growth factor</fullName>
        <shortName>MGF</shortName>
    </alternativeName>
    <alternativeName>
        <fullName>Stem cell factor</fullName>
        <shortName>SCF</shortName>
    </alternativeName>
    <alternativeName>
        <fullName>c-Kit ligand</fullName>
    </alternativeName>
    <component>
        <recommendedName>
            <fullName>Soluble KIT ligand</fullName>
            <shortName>sKITLG</shortName>
        </recommendedName>
    </component>
</protein>
<gene>
    <name type="primary">Kitlg</name>
    <name type="synonym">Kitl</name>
    <name type="synonym">Mgf</name>
</gene>
<sequence>MKKTQTWIITCIYLQLLLFNPLVKTQEICRNPVTDNVKDITKLVANLPNDYMITLNYVAGMDVLPSHCWLRDMVTHLSVSLTTLLDKFSNISEGLSNYSIIDKLGKIVDDLVACMEENAPKNVKESLKKPETRNFTPEEFFSIFNRSIDAFKDFMVASDTSDCVLSSTLGPEKDSRVSVTKPFMLPPVAASSLRNDSSSSNRKAAKSPEDPGLQWTAMALPALISLVIGFAFGALYWKKKQSSLTRAVENIQINEEDNEISMLQQKEREFQEV</sequence>
<reference key="1">
    <citation type="submission" date="1998-06" db="EMBL/GenBank/DDBJ databases">
        <authorList>
            <person name="Teramoto T."/>
            <person name="Nagashima M."/>
            <person name="Thorgeirsson S.S."/>
        </authorList>
    </citation>
    <scope>NUCLEOTIDE SEQUENCE [MRNA] (ISOFORMS 1 AND 2)</scope>
</reference>
<reference key="2">
    <citation type="journal article" date="1990" name="Cell">
        <title>Primary structure and functional expression of rat and human stem cell factor DNAs.</title>
        <authorList>
            <person name="Martin F.H."/>
            <person name="Suggs S.V."/>
            <person name="Langley K.E."/>
            <person name="Lu H.S."/>
            <person name="Ting J."/>
            <person name="Okino K.H."/>
            <person name="Morris C.F."/>
            <person name="McNiece I.K."/>
            <person name="Jacobsen F.W."/>
            <person name="Mendiaz E.A."/>
            <person name="Birkett N.C."/>
            <person name="Smith K.A."/>
            <person name="Johnson M.J."/>
            <person name="Parker V.P."/>
            <person name="Flores J.C."/>
            <person name="Patel A.C."/>
            <person name="Fisher E.F."/>
            <person name="Erjavec H.O."/>
            <person name="Herrera C.J."/>
            <person name="Wypych J."/>
            <person name="Sachdev R.K."/>
            <person name="Pope J.A."/>
            <person name="Leslie I."/>
            <person name="Wen D."/>
            <person name="Lin C.-H."/>
            <person name="Cupples R.L."/>
            <person name="Zsebo K.M."/>
        </authorList>
    </citation>
    <scope>NUCLEOTIDE SEQUENCE [MRNA] OF 1-201</scope>
    <scope>PARTIAL PROTEIN SEQUENCE</scope>
</reference>
<reference key="3">
    <citation type="journal article" date="1991" name="J. Biol. Chem.">
        <title>Amino acid sequence and post-translational modification of stem cell factor isolated from buffalo rat liver cell-conditioned medium.</title>
        <authorList>
            <person name="Lu H.S."/>
            <person name="Clogston C.L."/>
            <person name="Wypych J."/>
            <person name="Fausset P.R."/>
            <person name="Lauren S."/>
            <person name="Mendiaz E.A."/>
            <person name="Zsebo K.M."/>
            <person name="Langley K.E."/>
        </authorList>
    </citation>
    <scope>PROTEIN SEQUENCE OF 26-190</scope>
    <scope>PYROGLUTAMATE FORMATION AT GLN-26</scope>
    <scope>GLYCOSYLATION AT ASN-90; ASN-145; SER-167; THR-168; THR-180 AND ASN-195</scope>
    <scope>LACK OF GLYCOSYLATION AT ASN-97</scope>
    <scope>DISULFIDE BONDS</scope>
    <source>
        <strain>Buffalo</strain>
        <tissue>Liver</tissue>
    </source>
</reference>
<reference key="4">
    <citation type="journal article" date="1990" name="Cell">
        <title>Identification, purification, and biological characterization of hematopoietic stem cell factor from buffalo rat liver-conditioned medium.</title>
        <authorList>
            <person name="Zsebo K.M."/>
            <person name="Wypych J."/>
            <person name="McNiece I.K."/>
            <person name="Lu H.S."/>
            <person name="Smith K.A."/>
            <person name="Karkare S.B."/>
            <person name="Sachdev R.K."/>
            <person name="Yuschenkoff V.N."/>
            <person name="Birkett N.C."/>
            <person name="Williams L.R."/>
            <person name="Satyagal V.N."/>
            <person name="Tung W."/>
            <person name="Bosselman R.A."/>
            <person name="Mendiaz E.A."/>
            <person name="Langley K.E."/>
        </authorList>
    </citation>
    <scope>PROTEIN SEQUENCE OF 26-39</scope>
</reference>
<accession>P21581</accession>
<accession>Q9QWZ4</accession>
<accession>Q9Z2E7</accession>
<comment type="function">
    <text>Ligand for the receptor-type protein-tyrosine kinase KIT. Plays an essential role in the regulation of cell survival and proliferation, hematopoiesis, stem cell maintenance, gametogenesis, mast cell development, migration and function, and in melanogenesis. KITLG/SCF binding can activate several signaling pathways. Promotes phosphorylation of PIK3R1, the regulatory subunit of phosphatidylinositol 3-kinase, and subsequent activation of the kinase AKT1. KITLG/SCF and KIT also transmit signals via GRB2 and activation of RAS, RAF1 and the MAP kinases MAPK1/ERK2 and/or MAPK3/ERK1. KITLG/SCF and KIT promote activation of STAT family members STAT1, STAT3 and STAT5. KITLG/SCF and KIT promote activation of PLCG1, leading to the production of the cellular signaling molecules diacylglycerol and inositol 1,4,5-trisphosphate. KITLG/SCF acts synergistically with other cytokines, probably interleukins.</text>
</comment>
<comment type="subunit">
    <text evidence="8">Homodimer, non-covalently linked (Probable). Heterotetramer with KIT, binding two KIT molecules; thereby mediates KIT dimerization and subsequent activation by autophosphorylation.</text>
</comment>
<comment type="subcellular location">
    <molecule>Isoform 1</molecule>
    <subcellularLocation>
        <location evidence="1">Cell membrane</location>
        <topology evidence="1">Single-pass type I membrane protein</topology>
    </subcellularLocation>
</comment>
<comment type="subcellular location">
    <molecule>Isoform 2</molecule>
    <subcellularLocation>
        <location evidence="2">Cytoplasm</location>
    </subcellularLocation>
    <subcellularLocation>
        <location evidence="1">Cytoplasm</location>
        <location evidence="1">Cytoskeleton</location>
    </subcellularLocation>
    <subcellularLocation>
        <location evidence="2">Cell membrane</location>
        <topology evidence="1">Single-pass type I membrane protein</topology>
    </subcellularLocation>
    <subcellularLocation>
        <location evidence="2">Cell projection</location>
        <location evidence="2">Lamellipodium</location>
    </subcellularLocation>
    <subcellularLocation>
        <location evidence="2">Cell projection</location>
        <location evidence="2">Filopodium</location>
    </subcellularLocation>
</comment>
<comment type="subcellular location">
    <molecule>Soluble KIT ligand</molecule>
    <subcellularLocation>
        <location evidence="1">Secreted</location>
    </subcellularLocation>
</comment>
<comment type="alternative products">
    <event type="alternative splicing"/>
    <isoform>
        <id>P21581-1</id>
        <name>1</name>
        <name>KL-1</name>
        <sequence type="displayed"/>
    </isoform>
    <isoform>
        <id>P21581-2</id>
        <name>2</name>
        <name>KL-2</name>
        <sequence type="described" ref="VSP_006025"/>
    </isoform>
</comment>
<comment type="developmental stage">
    <text>Acts in the early stages of hematopoiesis.</text>
</comment>
<comment type="PTM">
    <text>A soluble form is produced by proteolytic processing of isoform 1 in the extracellular domain.</text>
</comment>
<comment type="PTM">
    <text evidence="5">The identity of N- and O-linked saccharides is not reported in PubMed:1708771. The O-linked polysaccharides are probably the mucin type linked to GalNAc.</text>
</comment>
<comment type="similarity">
    <text evidence="8">Belongs to the SCF family.</text>
</comment>
<name>SCF_RAT</name>
<dbReference type="EMBL" id="AF071204">
    <property type="protein sequence ID" value="AAD02827.1"/>
    <property type="molecule type" value="mRNA"/>
</dbReference>
<dbReference type="EMBL" id="AF071205">
    <property type="protein sequence ID" value="AAD02828.1"/>
    <property type="molecule type" value="mRNA"/>
</dbReference>
<dbReference type="EMBL" id="M59966">
    <property type="protein sequence ID" value="AAA42117.1"/>
    <property type="molecule type" value="mRNA"/>
</dbReference>
<dbReference type="PIR" id="B35974">
    <property type="entry name" value="B35974"/>
</dbReference>
<dbReference type="RefSeq" id="NP_068615.1">
    <molecule id="P21581-1"/>
    <property type="nucleotide sequence ID" value="NM_021843.4"/>
</dbReference>
<dbReference type="RefSeq" id="NP_068616.1">
    <molecule id="P21581-2"/>
    <property type="nucleotide sequence ID" value="NM_021844.2"/>
</dbReference>
<dbReference type="RefSeq" id="XP_063120266.1">
    <molecule id="P21581-1"/>
    <property type="nucleotide sequence ID" value="XM_063264196.1"/>
</dbReference>
<dbReference type="SMR" id="P21581"/>
<dbReference type="BioGRID" id="248828">
    <property type="interactions" value="2"/>
</dbReference>
<dbReference type="FunCoup" id="P21581">
    <property type="interactions" value="982"/>
</dbReference>
<dbReference type="STRING" id="10116.ENSRNOP00000008471"/>
<dbReference type="GlyCosmos" id="P21581">
    <property type="glycosylation" value="6 sites, No reported glycans"/>
</dbReference>
<dbReference type="GlyGen" id="P21581">
    <property type="glycosylation" value="6 sites"/>
</dbReference>
<dbReference type="iPTMnet" id="P21581"/>
<dbReference type="PhosphoSitePlus" id="P21581"/>
<dbReference type="PaxDb" id="10116-ENSRNOP00000008471"/>
<dbReference type="Ensembl" id="ENSRNOT00000008471.9">
    <molecule id="P21581-1"/>
    <property type="protein sequence ID" value="ENSRNOP00000008471.5"/>
    <property type="gene ID" value="ENSRNOG00000005386.9"/>
</dbReference>
<dbReference type="GeneID" id="60427"/>
<dbReference type="KEGG" id="rno:60427"/>
<dbReference type="AGR" id="RGD:3086"/>
<dbReference type="CTD" id="4254"/>
<dbReference type="RGD" id="3086">
    <property type="gene designation" value="Kitlg"/>
</dbReference>
<dbReference type="eggNOG" id="ENOG502QTGT">
    <property type="taxonomic scope" value="Eukaryota"/>
</dbReference>
<dbReference type="GeneTree" id="ENSGT00390000018272"/>
<dbReference type="HOGENOM" id="CLU_090207_0_0_1"/>
<dbReference type="InParanoid" id="P21581"/>
<dbReference type="OMA" id="TKGICRN"/>
<dbReference type="OrthoDB" id="46607at9989"/>
<dbReference type="PhylomeDB" id="P21581"/>
<dbReference type="TreeFam" id="TF330811"/>
<dbReference type="Reactome" id="R-RNO-1257604">
    <property type="pathway name" value="PIP3 activates AKT signaling"/>
</dbReference>
<dbReference type="Reactome" id="R-RNO-1433557">
    <property type="pathway name" value="Signaling by SCF-KIT"/>
</dbReference>
<dbReference type="Reactome" id="R-RNO-1433559">
    <property type="pathway name" value="Regulation of KIT signaling"/>
</dbReference>
<dbReference type="Reactome" id="R-RNO-5673001">
    <property type="pathway name" value="RAF/MAP kinase cascade"/>
</dbReference>
<dbReference type="Reactome" id="R-RNO-6811558">
    <property type="pathway name" value="PI5P, PP2A and IER3 Regulate PI3K/AKT Signaling"/>
</dbReference>
<dbReference type="Reactome" id="R-RNO-9856649">
    <property type="pathway name" value="Transcriptional and post-translational regulation of MITF-M expression and activity"/>
</dbReference>
<dbReference type="PRO" id="PR:P21581"/>
<dbReference type="Proteomes" id="UP000002494">
    <property type="component" value="Chromosome 7"/>
</dbReference>
<dbReference type="Bgee" id="ENSRNOG00000005386">
    <property type="expression patterns" value="Expressed in lung and 20 other cell types or tissues"/>
</dbReference>
<dbReference type="ExpressionAtlas" id="P21581">
    <property type="expression patterns" value="baseline and differential"/>
</dbReference>
<dbReference type="GO" id="GO:0005737">
    <property type="term" value="C:cytoplasm"/>
    <property type="evidence" value="ECO:0000250"/>
    <property type="project" value="UniProtKB"/>
</dbReference>
<dbReference type="GO" id="GO:0005856">
    <property type="term" value="C:cytoskeleton"/>
    <property type="evidence" value="ECO:0007669"/>
    <property type="project" value="UniProtKB-SubCell"/>
</dbReference>
<dbReference type="GO" id="GO:0005615">
    <property type="term" value="C:extracellular space"/>
    <property type="evidence" value="ECO:0000266"/>
    <property type="project" value="RGD"/>
</dbReference>
<dbReference type="GO" id="GO:0030175">
    <property type="term" value="C:filopodium"/>
    <property type="evidence" value="ECO:0000250"/>
    <property type="project" value="UniProtKB"/>
</dbReference>
<dbReference type="GO" id="GO:0030027">
    <property type="term" value="C:lamellipodium"/>
    <property type="evidence" value="ECO:0000250"/>
    <property type="project" value="UniProtKB"/>
</dbReference>
<dbReference type="GO" id="GO:0016020">
    <property type="term" value="C:membrane"/>
    <property type="evidence" value="ECO:0000266"/>
    <property type="project" value="RGD"/>
</dbReference>
<dbReference type="GO" id="GO:0005886">
    <property type="term" value="C:plasma membrane"/>
    <property type="evidence" value="ECO:0000250"/>
    <property type="project" value="UniProtKB"/>
</dbReference>
<dbReference type="GO" id="GO:0005125">
    <property type="term" value="F:cytokine activity"/>
    <property type="evidence" value="ECO:0000266"/>
    <property type="project" value="RGD"/>
</dbReference>
<dbReference type="GO" id="GO:0008083">
    <property type="term" value="F:growth factor activity"/>
    <property type="evidence" value="ECO:0007669"/>
    <property type="project" value="UniProtKB-KW"/>
</dbReference>
<dbReference type="GO" id="GO:0005173">
    <property type="term" value="F:stem cell factor receptor binding"/>
    <property type="evidence" value="ECO:0000266"/>
    <property type="project" value="RGD"/>
</dbReference>
<dbReference type="GO" id="GO:0006915">
    <property type="term" value="P:apoptotic process"/>
    <property type="evidence" value="ECO:0000266"/>
    <property type="project" value="RGD"/>
</dbReference>
<dbReference type="GO" id="GO:0007155">
    <property type="term" value="P:cell adhesion"/>
    <property type="evidence" value="ECO:0007669"/>
    <property type="project" value="UniProtKB-KW"/>
</dbReference>
<dbReference type="GO" id="GO:0008283">
    <property type="term" value="P:cell population proliferation"/>
    <property type="evidence" value="ECO:0000266"/>
    <property type="project" value="RGD"/>
</dbReference>
<dbReference type="GO" id="GO:0035234">
    <property type="term" value="P:ectopic germ cell programmed cell death"/>
    <property type="evidence" value="ECO:0000266"/>
    <property type="project" value="RGD"/>
</dbReference>
<dbReference type="GO" id="GO:0035162">
    <property type="term" value="P:embryonic hemopoiesis"/>
    <property type="evidence" value="ECO:0000266"/>
    <property type="project" value="RGD"/>
</dbReference>
<dbReference type="GO" id="GO:0097192">
    <property type="term" value="P:extrinsic apoptotic signaling pathway in absence of ligand"/>
    <property type="evidence" value="ECO:0000266"/>
    <property type="project" value="RGD"/>
</dbReference>
<dbReference type="GO" id="GO:0002244">
    <property type="term" value="P:hematopoietic progenitor cell differentiation"/>
    <property type="evidence" value="ECO:0000266"/>
    <property type="project" value="RGD"/>
</dbReference>
<dbReference type="GO" id="GO:0008584">
    <property type="term" value="P:male gonad development"/>
    <property type="evidence" value="ECO:0000266"/>
    <property type="project" value="RGD"/>
</dbReference>
<dbReference type="GO" id="GO:0033024">
    <property type="term" value="P:mast cell apoptotic process"/>
    <property type="evidence" value="ECO:0000266"/>
    <property type="project" value="RGD"/>
</dbReference>
<dbReference type="GO" id="GO:0097531">
    <property type="term" value="P:mast cell migration"/>
    <property type="evidence" value="ECO:0000266"/>
    <property type="project" value="RGD"/>
</dbReference>
<dbReference type="GO" id="GO:0070662">
    <property type="term" value="P:mast cell proliferation"/>
    <property type="evidence" value="ECO:0000266"/>
    <property type="project" value="RGD"/>
</dbReference>
<dbReference type="GO" id="GO:0097324">
    <property type="term" value="P:melanocyte migration"/>
    <property type="evidence" value="ECO:0000266"/>
    <property type="project" value="RGD"/>
</dbReference>
<dbReference type="GO" id="GO:0002573">
    <property type="term" value="P:myeloid leukocyte differentiation"/>
    <property type="evidence" value="ECO:0000266"/>
    <property type="project" value="RGD"/>
</dbReference>
<dbReference type="GO" id="GO:0043066">
    <property type="term" value="P:negative regulation of apoptotic process"/>
    <property type="evidence" value="ECO:0000266"/>
    <property type="project" value="RGD"/>
</dbReference>
<dbReference type="GO" id="GO:0033026">
    <property type="term" value="P:negative regulation of mast cell apoptotic process"/>
    <property type="evidence" value="ECO:0000266"/>
    <property type="project" value="RGD"/>
</dbReference>
<dbReference type="GO" id="GO:0001755">
    <property type="term" value="P:neural crest cell migration"/>
    <property type="evidence" value="ECO:0000266"/>
    <property type="project" value="RGD"/>
</dbReference>
<dbReference type="GO" id="GO:0001541">
    <property type="term" value="P:ovarian follicle development"/>
    <property type="evidence" value="ECO:0000314"/>
    <property type="project" value="RGD"/>
</dbReference>
<dbReference type="GO" id="GO:0008284">
    <property type="term" value="P:positive regulation of cell population proliferation"/>
    <property type="evidence" value="ECO:0000314"/>
    <property type="project" value="RGD"/>
</dbReference>
<dbReference type="GO" id="GO:1901534">
    <property type="term" value="P:positive regulation of hematopoietic progenitor cell differentiation"/>
    <property type="evidence" value="ECO:0000266"/>
    <property type="project" value="RGD"/>
</dbReference>
<dbReference type="GO" id="GO:1902035">
    <property type="term" value="P:positive regulation of hematopoietic stem cell proliferation"/>
    <property type="evidence" value="ECO:0000266"/>
    <property type="project" value="RGD"/>
</dbReference>
<dbReference type="GO" id="GO:0002687">
    <property type="term" value="P:positive regulation of leukocyte migration"/>
    <property type="evidence" value="ECO:0000266"/>
    <property type="project" value="RGD"/>
</dbReference>
<dbReference type="GO" id="GO:0070668">
    <property type="term" value="P:positive regulation of mast cell proliferation"/>
    <property type="evidence" value="ECO:0000266"/>
    <property type="project" value="RGD"/>
</dbReference>
<dbReference type="GO" id="GO:0045636">
    <property type="term" value="P:positive regulation of melanocyte differentiation"/>
    <property type="evidence" value="ECO:0000266"/>
    <property type="project" value="RGD"/>
</dbReference>
<dbReference type="GO" id="GO:0002763">
    <property type="term" value="P:positive regulation of myeloid leukocyte differentiation"/>
    <property type="evidence" value="ECO:0000266"/>
    <property type="project" value="RGD"/>
</dbReference>
<dbReference type="GO" id="GO:0046579">
    <property type="term" value="P:positive regulation of Ras protein signal transduction"/>
    <property type="evidence" value="ECO:0000266"/>
    <property type="project" value="RGD"/>
</dbReference>
<dbReference type="GO" id="GO:0042102">
    <property type="term" value="P:positive regulation of T cell proliferation"/>
    <property type="evidence" value="ECO:0000266"/>
    <property type="project" value="RGD"/>
</dbReference>
<dbReference type="GO" id="GO:0007265">
    <property type="term" value="P:Ras protein signal transduction"/>
    <property type="evidence" value="ECO:0000266"/>
    <property type="project" value="RGD"/>
</dbReference>
<dbReference type="GO" id="GO:0042098">
    <property type="term" value="P:T cell proliferation"/>
    <property type="evidence" value="ECO:0000266"/>
    <property type="project" value="RGD"/>
</dbReference>
<dbReference type="FunFam" id="1.20.1250.10:FF:000004">
    <property type="entry name" value="Kit ligand"/>
    <property type="match status" value="1"/>
</dbReference>
<dbReference type="Gene3D" id="1.20.1250.10">
    <property type="match status" value="1"/>
</dbReference>
<dbReference type="InterPro" id="IPR009079">
    <property type="entry name" value="4_helix_cytokine-like_core"/>
</dbReference>
<dbReference type="InterPro" id="IPR003452">
    <property type="entry name" value="SCF"/>
</dbReference>
<dbReference type="PANTHER" id="PTHR11574">
    <property type="entry name" value="KIT LIGAND"/>
    <property type="match status" value="1"/>
</dbReference>
<dbReference type="PANTHER" id="PTHR11574:SF0">
    <property type="entry name" value="KIT LIGAND"/>
    <property type="match status" value="1"/>
</dbReference>
<dbReference type="Pfam" id="PF02404">
    <property type="entry name" value="SCF"/>
    <property type="match status" value="1"/>
</dbReference>
<dbReference type="PIRSF" id="PIRSF015599">
    <property type="entry name" value="SCF"/>
    <property type="match status" value="1"/>
</dbReference>
<dbReference type="SUPFAM" id="SSF47266">
    <property type="entry name" value="4-helical cytokines"/>
    <property type="match status" value="1"/>
</dbReference>
<feature type="signal peptide" evidence="5 6">
    <location>
        <begin position="1"/>
        <end position="25"/>
    </location>
</feature>
<feature type="chain" id="PRO_0000031917" description="Kit ligand">
    <location>
        <begin position="26"/>
        <end position="273"/>
    </location>
</feature>
<feature type="chain" id="PRO_0000403393" description="Soluble KIT ligand" evidence="1">
    <location>
        <begin position="26"/>
        <end position="190"/>
    </location>
</feature>
<feature type="topological domain" description="Extracellular" evidence="3">
    <location>
        <begin position="26"/>
        <end position="214"/>
    </location>
</feature>
<feature type="transmembrane region" description="Helical" evidence="3">
    <location>
        <begin position="215"/>
        <end position="237"/>
    </location>
</feature>
<feature type="topological domain" description="Cytoplasmic" evidence="3">
    <location>
        <begin position="238"/>
        <end position="273"/>
    </location>
</feature>
<feature type="region of interest" description="Disordered" evidence="4">
    <location>
        <begin position="190"/>
        <end position="211"/>
    </location>
</feature>
<feature type="compositionally biased region" description="Low complexity" evidence="4">
    <location>
        <begin position="191"/>
        <end position="202"/>
    </location>
</feature>
<feature type="site" description="Not glycosylated" evidence="5">
    <location>
        <position position="97"/>
    </location>
</feature>
<feature type="modified residue" description="Pyrrolidone carboxylic acid" evidence="5">
    <location>
        <position position="26"/>
    </location>
</feature>
<feature type="glycosylation site" description="N-linked (GlcNAc...) asparagine; partial" evidence="5">
    <location>
        <position position="90"/>
    </location>
</feature>
<feature type="glycosylation site" description="N-linked (GlcNAc...) asparagine" evidence="5">
    <location>
        <position position="145"/>
    </location>
</feature>
<feature type="glycosylation site" description="O-linked (GalNAc...) serine" evidence="9">
    <location>
        <position position="167"/>
    </location>
</feature>
<feature type="glycosylation site" description="O-linked (GalNAc...) threonine" evidence="9">
    <location>
        <position position="168"/>
    </location>
</feature>
<feature type="glycosylation site" description="O-linked (GalNAc...) threonine" evidence="9">
    <location>
        <position position="180"/>
    </location>
</feature>
<feature type="glycosylation site" description="N-linked (GlcNAc...) asparagine" evidence="3">
    <location>
        <position position="195"/>
    </location>
</feature>
<feature type="disulfide bond" evidence="5">
    <location>
        <begin position="29"/>
        <end position="114"/>
    </location>
</feature>
<feature type="disulfide bond" evidence="5">
    <location>
        <begin position="68"/>
        <end position="163"/>
    </location>
</feature>
<feature type="splice variant" id="VSP_006025" description="In isoform 2." evidence="7">
    <original>DSRVSVTKPFMLPPVAASSLRNDSSSSNR</original>
    <variation>G</variation>
    <location>
        <begin position="174"/>
        <end position="202"/>
    </location>
</feature>
<feature type="sequence conflict" description="In Ref. 1; AAD02828." evidence="8" ref="1">
    <original>S</original>
    <variation>P</variation>
    <location>
        <position position="207"/>
    </location>
</feature>
<keyword id="KW-0025">Alternative splicing</keyword>
<keyword id="KW-0130">Cell adhesion</keyword>
<keyword id="KW-1003">Cell membrane</keyword>
<keyword id="KW-0966">Cell projection</keyword>
<keyword id="KW-0963">Cytoplasm</keyword>
<keyword id="KW-0206">Cytoskeleton</keyword>
<keyword id="KW-0903">Direct protein sequencing</keyword>
<keyword id="KW-1015">Disulfide bond</keyword>
<keyword id="KW-0325">Glycoprotein</keyword>
<keyword id="KW-0339">Growth factor</keyword>
<keyword id="KW-0472">Membrane</keyword>
<keyword id="KW-0873">Pyrrolidone carboxylic acid</keyword>
<keyword id="KW-1185">Reference proteome</keyword>
<keyword id="KW-0964">Secreted</keyword>
<keyword id="KW-0732">Signal</keyword>
<keyword id="KW-0812">Transmembrane</keyword>
<keyword id="KW-1133">Transmembrane helix</keyword>
<evidence type="ECO:0000250" key="1"/>
<evidence type="ECO:0000250" key="2">
    <source>
        <dbReference type="UniProtKB" id="P21583"/>
    </source>
</evidence>
<evidence type="ECO:0000255" key="3"/>
<evidence type="ECO:0000256" key="4">
    <source>
        <dbReference type="SAM" id="MobiDB-lite"/>
    </source>
</evidence>
<evidence type="ECO:0000269" key="5">
    <source>
    </source>
</evidence>
<evidence type="ECO:0000269" key="6">
    <source>
    </source>
</evidence>
<evidence type="ECO:0000303" key="7">
    <source ref="1"/>
</evidence>
<evidence type="ECO:0000305" key="8"/>
<evidence type="ECO:0000305" key="9">
    <source>
    </source>
</evidence>